<reference key="1">
    <citation type="journal article" date="2004" name="J. Mol. Microbiol. Biotechnol.">
        <title>The complete genome sequence of Bacillus licheniformis DSM13, an organism with great industrial potential.</title>
        <authorList>
            <person name="Veith B."/>
            <person name="Herzberg C."/>
            <person name="Steckel S."/>
            <person name="Feesche J."/>
            <person name="Maurer K.H."/>
            <person name="Ehrenreich P."/>
            <person name="Baeumer S."/>
            <person name="Henne A."/>
            <person name="Liesegang H."/>
            <person name="Merkl R."/>
            <person name="Ehrenreich A."/>
            <person name="Gottschalk G."/>
        </authorList>
    </citation>
    <scope>NUCLEOTIDE SEQUENCE [LARGE SCALE GENOMIC DNA]</scope>
    <source>
        <strain>ATCC 14580 / DSM 13 / JCM 2505 / CCUG 7422 / NBRC 12200 / NCIMB 9375 / NCTC 10341 / NRRL NRS-1264 / Gibson 46</strain>
    </source>
</reference>
<reference key="2">
    <citation type="journal article" date="2004" name="Genome Biol.">
        <title>Complete genome sequence of the industrial bacterium Bacillus licheniformis and comparisons with closely related Bacillus species.</title>
        <authorList>
            <person name="Rey M.W."/>
            <person name="Ramaiya P."/>
            <person name="Nelson B.A."/>
            <person name="Brody-Karpin S.D."/>
            <person name="Zaretsky E.J."/>
            <person name="Tang M."/>
            <person name="Lopez de Leon A."/>
            <person name="Xiang H."/>
            <person name="Gusti V."/>
            <person name="Clausen I.G."/>
            <person name="Olsen P.B."/>
            <person name="Rasmussen M.D."/>
            <person name="Andersen J.T."/>
            <person name="Joergensen P.L."/>
            <person name="Larsen T.S."/>
            <person name="Sorokin A."/>
            <person name="Bolotin A."/>
            <person name="Lapidus A."/>
            <person name="Galleron N."/>
            <person name="Ehrlich S.D."/>
            <person name="Berka R.M."/>
        </authorList>
    </citation>
    <scope>NUCLEOTIDE SEQUENCE [LARGE SCALE GENOMIC DNA]</scope>
    <source>
        <strain>ATCC 14580 / DSM 13 / JCM 2505 / CCUG 7422 / NBRC 12200 / NCIMB 9375 / NCTC 10341 / NRRL NRS-1264 / Gibson 46</strain>
    </source>
</reference>
<protein>
    <recommendedName>
        <fullName evidence="1">UPF0340 protein BLi03936/BL03990</fullName>
    </recommendedName>
</protein>
<name>Y3990_BACLD</name>
<dbReference type="EMBL" id="CP000002">
    <property type="protein sequence ID" value="AAU25375.1"/>
    <property type="molecule type" value="Genomic_DNA"/>
</dbReference>
<dbReference type="EMBL" id="AE017333">
    <property type="protein sequence ID" value="AAU42750.1"/>
    <property type="molecule type" value="Genomic_DNA"/>
</dbReference>
<dbReference type="RefSeq" id="WP_003186019.1">
    <property type="nucleotide sequence ID" value="NC_006322.1"/>
</dbReference>
<dbReference type="SMR" id="Q65DW4"/>
<dbReference type="STRING" id="279010.BL03990"/>
<dbReference type="KEGG" id="bld:BLi03936"/>
<dbReference type="KEGG" id="bli:BL03990"/>
<dbReference type="eggNOG" id="COG4475">
    <property type="taxonomic scope" value="Bacteria"/>
</dbReference>
<dbReference type="HOGENOM" id="CLU_106658_0_0_9"/>
<dbReference type="Proteomes" id="UP000000606">
    <property type="component" value="Chromosome"/>
</dbReference>
<dbReference type="Gene3D" id="3.40.50.10360">
    <property type="entry name" value="Hypothetical protein TT1679"/>
    <property type="match status" value="1"/>
</dbReference>
<dbReference type="HAMAP" id="MF_00800">
    <property type="entry name" value="UPF0340"/>
    <property type="match status" value="1"/>
</dbReference>
<dbReference type="InterPro" id="IPR028345">
    <property type="entry name" value="Antibiotic_NAT-like"/>
</dbReference>
<dbReference type="InterPro" id="IPR006340">
    <property type="entry name" value="DUF436"/>
</dbReference>
<dbReference type="NCBIfam" id="TIGR01440">
    <property type="entry name" value="TIGR01440 family protein"/>
    <property type="match status" value="1"/>
</dbReference>
<dbReference type="Pfam" id="PF04260">
    <property type="entry name" value="DUF436"/>
    <property type="match status" value="1"/>
</dbReference>
<dbReference type="PIRSF" id="PIRSF007510">
    <property type="entry name" value="UCP007510"/>
    <property type="match status" value="1"/>
</dbReference>
<dbReference type="SUPFAM" id="SSF110710">
    <property type="entry name" value="TTHA0583/YokD-like"/>
    <property type="match status" value="1"/>
</dbReference>
<accession>Q65DW4</accession>
<accession>Q62PD6</accession>
<comment type="similarity">
    <text evidence="1">Belongs to the UPF0340 family.</text>
</comment>
<sequence>MKNLEQTWRSILDEFHQQANLREGHIVVIGCSTSEVAGRRIGTSGSEQIAEAVYKGLEELRDRTGIALAFQCCEHLNRALVVEEETAKAYRLPVVFAIPVPKAGGSMASYAYKHMKAPVLVEQIEADAGIDIGDTFIGMHLKPVAVPVRVSQKQLGEAHVTLARTRPKLIGGVRAVYEAE</sequence>
<keyword id="KW-1185">Reference proteome</keyword>
<gene>
    <name type="ordered locus">BLi03936</name>
    <name type="ordered locus">BL03990</name>
</gene>
<proteinExistence type="inferred from homology"/>
<feature type="chain" id="PRO_1000046974" description="UPF0340 protein BLi03936/BL03990">
    <location>
        <begin position="1"/>
        <end position="180"/>
    </location>
</feature>
<evidence type="ECO:0000255" key="1">
    <source>
        <dbReference type="HAMAP-Rule" id="MF_00800"/>
    </source>
</evidence>
<organism>
    <name type="scientific">Bacillus licheniformis (strain ATCC 14580 / DSM 13 / JCM 2505 / CCUG 7422 / NBRC 12200 / NCIMB 9375 / NCTC 10341 / NRRL NRS-1264 / Gibson 46)</name>
    <dbReference type="NCBI Taxonomy" id="279010"/>
    <lineage>
        <taxon>Bacteria</taxon>
        <taxon>Bacillati</taxon>
        <taxon>Bacillota</taxon>
        <taxon>Bacilli</taxon>
        <taxon>Bacillales</taxon>
        <taxon>Bacillaceae</taxon>
        <taxon>Bacillus</taxon>
    </lineage>
</organism>